<name>ZNT1_MACFA</name>
<accession>Q4R6K2</accession>
<accession>Q4R8P6</accession>
<dbReference type="EMBL" id="AB168404">
    <property type="protein sequence ID" value="BAE00525.1"/>
    <property type="status" value="ALT_INIT"/>
    <property type="molecule type" value="mRNA"/>
</dbReference>
<dbReference type="EMBL" id="AB169181">
    <property type="protein sequence ID" value="BAE01273.1"/>
    <property type="molecule type" value="mRNA"/>
</dbReference>
<dbReference type="RefSeq" id="NP_001270881.1">
    <property type="nucleotide sequence ID" value="NM_001283952.1"/>
</dbReference>
<dbReference type="SMR" id="Q4R6K2"/>
<dbReference type="STRING" id="9541.ENSMFAP00000042359"/>
<dbReference type="eggNOG" id="KOG1483">
    <property type="taxonomic scope" value="Eukaryota"/>
</dbReference>
<dbReference type="Proteomes" id="UP000233100">
    <property type="component" value="Unplaced"/>
</dbReference>
<dbReference type="GO" id="GO:0016323">
    <property type="term" value="C:basolateral plasma membrane"/>
    <property type="evidence" value="ECO:0000250"/>
    <property type="project" value="UniProtKB"/>
</dbReference>
<dbReference type="GO" id="GO:0030659">
    <property type="term" value="C:cytoplasmic vesicle membrane"/>
    <property type="evidence" value="ECO:0000250"/>
    <property type="project" value="UniProtKB"/>
</dbReference>
<dbReference type="GO" id="GO:0005789">
    <property type="term" value="C:endoplasmic reticulum membrane"/>
    <property type="evidence" value="ECO:0007669"/>
    <property type="project" value="UniProtKB-SubCell"/>
</dbReference>
<dbReference type="GO" id="GO:0000139">
    <property type="term" value="C:Golgi membrane"/>
    <property type="evidence" value="ECO:0007669"/>
    <property type="project" value="UniProtKB-SubCell"/>
</dbReference>
<dbReference type="GO" id="GO:0031965">
    <property type="term" value="C:nuclear membrane"/>
    <property type="evidence" value="ECO:0007669"/>
    <property type="project" value="UniProtKB-SubCell"/>
</dbReference>
<dbReference type="GO" id="GO:0005886">
    <property type="term" value="C:plasma membrane"/>
    <property type="evidence" value="ECO:0000250"/>
    <property type="project" value="UniProtKB"/>
</dbReference>
<dbReference type="GO" id="GO:0019855">
    <property type="term" value="F:calcium channel inhibitor activity"/>
    <property type="evidence" value="ECO:0007669"/>
    <property type="project" value="TreeGrafter"/>
</dbReference>
<dbReference type="GO" id="GO:0046872">
    <property type="term" value="F:metal ion binding"/>
    <property type="evidence" value="ECO:0007669"/>
    <property type="project" value="UniProtKB-KW"/>
</dbReference>
<dbReference type="GO" id="GO:0140826">
    <property type="term" value="F:zinc:proton antiporter activity"/>
    <property type="evidence" value="ECO:0000250"/>
    <property type="project" value="UniProtKB"/>
</dbReference>
<dbReference type="GO" id="GO:0042742">
    <property type="term" value="P:defense response to bacterium"/>
    <property type="evidence" value="ECO:0000250"/>
    <property type="project" value="UniProtKB"/>
</dbReference>
<dbReference type="GO" id="GO:0010312">
    <property type="term" value="P:detoxification of zinc ion"/>
    <property type="evidence" value="ECO:0007669"/>
    <property type="project" value="TreeGrafter"/>
</dbReference>
<dbReference type="GO" id="GO:0006882">
    <property type="term" value="P:intracellular zinc ion homeostasis"/>
    <property type="evidence" value="ECO:0000250"/>
    <property type="project" value="UniProtKB"/>
</dbReference>
<dbReference type="GO" id="GO:0140882">
    <property type="term" value="P:zinc export across plasma membrane"/>
    <property type="evidence" value="ECO:0000250"/>
    <property type="project" value="UniProtKB"/>
</dbReference>
<dbReference type="GO" id="GO:0062111">
    <property type="term" value="P:zinc ion import into organelle"/>
    <property type="evidence" value="ECO:0000250"/>
    <property type="project" value="UniProtKB"/>
</dbReference>
<dbReference type="Gene3D" id="1.20.1510.10">
    <property type="entry name" value="Cation efflux protein transmembrane domain"/>
    <property type="match status" value="1"/>
</dbReference>
<dbReference type="InterPro" id="IPR002524">
    <property type="entry name" value="Cation_efflux"/>
</dbReference>
<dbReference type="InterPro" id="IPR036837">
    <property type="entry name" value="Cation_efflux_CTD_sf"/>
</dbReference>
<dbReference type="InterPro" id="IPR027469">
    <property type="entry name" value="Cation_efflux_TMD_sf"/>
</dbReference>
<dbReference type="NCBIfam" id="TIGR01297">
    <property type="entry name" value="CDF"/>
    <property type="match status" value="1"/>
</dbReference>
<dbReference type="PANTHER" id="PTHR45820">
    <property type="entry name" value="FI23527P1"/>
    <property type="match status" value="1"/>
</dbReference>
<dbReference type="PANTHER" id="PTHR45820:SF1">
    <property type="entry name" value="PROTON-COUPLED ZINC ANTIPORTER SLC30A1"/>
    <property type="match status" value="1"/>
</dbReference>
<dbReference type="Pfam" id="PF01545">
    <property type="entry name" value="Cation_efflux"/>
    <property type="match status" value="1"/>
</dbReference>
<dbReference type="SUPFAM" id="SSF160240">
    <property type="entry name" value="Cation efflux protein cytoplasmic domain-like"/>
    <property type="match status" value="1"/>
</dbReference>
<dbReference type="SUPFAM" id="SSF161111">
    <property type="entry name" value="Cation efflux protein transmembrane domain-like"/>
    <property type="match status" value="1"/>
</dbReference>
<organism>
    <name type="scientific">Macaca fascicularis</name>
    <name type="common">Crab-eating macaque</name>
    <name type="synonym">Cynomolgus monkey</name>
    <dbReference type="NCBI Taxonomy" id="9541"/>
    <lineage>
        <taxon>Eukaryota</taxon>
        <taxon>Metazoa</taxon>
        <taxon>Chordata</taxon>
        <taxon>Craniata</taxon>
        <taxon>Vertebrata</taxon>
        <taxon>Euteleostomi</taxon>
        <taxon>Mammalia</taxon>
        <taxon>Eutheria</taxon>
        <taxon>Euarchontoglires</taxon>
        <taxon>Primates</taxon>
        <taxon>Haplorrhini</taxon>
        <taxon>Catarrhini</taxon>
        <taxon>Cercopithecidae</taxon>
        <taxon>Cercopithecinae</taxon>
        <taxon>Macaca</taxon>
    </lineage>
</organism>
<protein>
    <recommendedName>
        <fullName evidence="3">Proton-coupled zinc antiporter SLC30A1</fullName>
    </recommendedName>
    <alternativeName>
        <fullName evidence="3">Solute carrier family 30 member 1</fullName>
    </alternativeName>
</protein>
<reference key="1">
    <citation type="submission" date="2005-06" db="EMBL/GenBank/DDBJ databases">
        <title>DNA sequences of macaque genes expressed in brain or testis and its evolutionary implications.</title>
        <authorList>
            <consortium name="International consortium for macaque cDNA sequencing and analysis"/>
        </authorList>
    </citation>
    <scope>NUCLEOTIDE SEQUENCE [LARGE SCALE MRNA]</scope>
    <source>
        <tissue>Testis</tissue>
    </source>
</reference>
<sequence length="505" mass="55231">MGCWGRNRGRLLCMLALTFMFMVLEVVVSRVTSSLAMLSDSFHMLSDVLALVVALVAERFARRTHATQKNTFGWIRAEVMGALVNAIFLTGLCFAILLEAIERFVEPHEMQQPLVVLGVGVAGLLVNVLGLCLFHHHSGFSQDSGHSHSHGSHGHGLPKGPRVKSSRPGSNDINVAPGEQGPDQEETNTLVANTSNSNGLKLDPADPEKPRSGDTVEVQVNGNLIREPDHVELEEDRAGQLNMRGVFLHVLGDALGSVIVVVNALVFYFSWKGCSEGDFCVNPCFPDPCKAFVEIINSTHASVYEAGPCWVLYLDPTLCVVMVCILLYTTYPLLKESALILLQTVPKQIDIRNLIKELRNVEGVEEVHELHVWQLAGSRIIATAHIKCEDPTSYMEVAKTIKDVFHNHGIHATTIQPEFASVGSKSSVVPCELACRTQCALKQCCGTLPQAHSGKDAEKTPTVSISCLELSNNLEKKPRRTKAENIPAVVIEIKNMPNKQPESSL</sequence>
<evidence type="ECO:0000250" key="1">
    <source>
        <dbReference type="UniProtKB" id="P69380"/>
    </source>
</evidence>
<evidence type="ECO:0000250" key="2">
    <source>
        <dbReference type="UniProtKB" id="Q62720"/>
    </source>
</evidence>
<evidence type="ECO:0000250" key="3">
    <source>
        <dbReference type="UniProtKB" id="Q9Y6M5"/>
    </source>
</evidence>
<evidence type="ECO:0000255" key="4"/>
<evidence type="ECO:0000256" key="5">
    <source>
        <dbReference type="SAM" id="MobiDB-lite"/>
    </source>
</evidence>
<evidence type="ECO:0000305" key="6"/>
<keyword id="KW-0050">Antiport</keyword>
<keyword id="KW-1003">Cell membrane</keyword>
<keyword id="KW-0963">Cytoplasm</keyword>
<keyword id="KW-0968">Cytoplasmic vesicle</keyword>
<keyword id="KW-0256">Endoplasmic reticulum</keyword>
<keyword id="KW-0325">Glycoprotein</keyword>
<keyword id="KW-0333">Golgi apparatus</keyword>
<keyword id="KW-0406">Ion transport</keyword>
<keyword id="KW-0472">Membrane</keyword>
<keyword id="KW-0479">Metal-binding</keyword>
<keyword id="KW-0539">Nucleus</keyword>
<keyword id="KW-0597">Phosphoprotein</keyword>
<keyword id="KW-1185">Reference proteome</keyword>
<keyword id="KW-0677">Repeat</keyword>
<keyword id="KW-0812">Transmembrane</keyword>
<keyword id="KW-1133">Transmembrane helix</keyword>
<keyword id="KW-0813">Transport</keyword>
<keyword id="KW-0862">Zinc</keyword>
<keyword id="KW-0864">Zinc transport</keyword>
<gene>
    <name evidence="3" type="primary">SLC30A1</name>
    <name type="ORF">QtsA-11880</name>
    <name type="ORF">QtsA-17815</name>
</gene>
<comment type="function">
    <text evidence="2 3">Zinc ion:proton antiporter that could function at the plasma membrane mediating zinc efflux from cells against its electrochemical gradient protecting them from intracellular zinc accumulation and toxicity (By similarity). Alternatively, could prevent the transport to the plasma membrane of CACNB2, the L-type calcium channels regulatory subunit, through a yet to be defined mechanism. By modulating the expression of these channels at the plasma membrane, could prevent calcium and zinc influx into cells. By the same mechanism, could also prevent L-type calcium channels-mediated heavy metal influx into cells (By similarity). In some cells, could also function as a zinc ion:proton antiporter mediating zinc entry into the lumen of cytoplasmic vesicles. In macrophages, can increase zinc ions concentration into the lumen of cytoplasmic vesicles containing engulfed bacteria and could help inactivate them (By similarity). Forms a complex with TMC6/EVER1 and TMC8/EVER2 at the ER membrane of keratynocytes which facilitates zinc uptake into the ER (By similarity). Down-regulates the activity of transcription factors induced by zinc and cytokines (By similarity).</text>
</comment>
<comment type="catalytic activity">
    <reaction evidence="2">
        <text>Zn(2+)(in) + 2 H(+)(out) = Zn(2+)(out) + 2 H(+)(in)</text>
        <dbReference type="Rhea" id="RHEA:72627"/>
        <dbReference type="ChEBI" id="CHEBI:15378"/>
        <dbReference type="ChEBI" id="CHEBI:29105"/>
    </reaction>
</comment>
<comment type="subunit">
    <text evidence="2 3">Homodimer. Interacts with TMEM163 (By similarity). Interacts and forms a complex with TMC6 and TMC8; the interaction regulates zinc transport into the ER (By similarity).</text>
</comment>
<comment type="subcellular location">
    <subcellularLocation>
        <location evidence="2">Cell membrane</location>
        <topology evidence="4">Multi-pass membrane protein</topology>
    </subcellularLocation>
    <subcellularLocation>
        <location evidence="2">Basolateral cell membrane</location>
        <topology evidence="4">Multi-pass membrane protein</topology>
    </subcellularLocation>
    <subcellularLocation>
        <location evidence="3">Cytoplasmic vesicle membrane</location>
        <topology evidence="4">Multi-pass membrane protein</topology>
    </subcellularLocation>
    <subcellularLocation>
        <location evidence="3">Cytoplasm</location>
    </subcellularLocation>
    <subcellularLocation>
        <location evidence="3">Endoplasmic reticulum membrane</location>
        <topology evidence="4">Multi-pass membrane protein</topology>
    </subcellularLocation>
    <subcellularLocation>
        <location evidence="3">Golgi apparatus membrane</location>
        <topology evidence="4">Multi-pass membrane protein</topology>
    </subcellularLocation>
    <subcellularLocation>
        <location evidence="3">Nucleus membrane</location>
        <topology evidence="4">Multi-pass membrane protein</topology>
    </subcellularLocation>
    <text evidence="2 3">Localization to the plasma membrane is regulated by cellular zinc status. Recruitment to the plasma membrane from an internal pool is stimulated by zinc while in absence of zinc the plasma membrane pool is endocytosed and degraded (By similarity). Localizes to the basolateral surface of enterocytes (By similarity). Localizes to zinc-containing intracellular vesicles in macrophages (By similarity). Localizes in the cytoplasm and to the ER, Golgi and nucleus membranes in keratinocytes (By similarity).</text>
</comment>
<comment type="similarity">
    <text evidence="6">Belongs to the cation diffusion facilitator (CDF) transporter (TC 2.A.4) family. SLC30A subfamily.</text>
</comment>
<comment type="sequence caution" evidence="6">
    <conflict type="erroneous initiation">
        <sequence resource="EMBL-CDS" id="BAE00525"/>
    </conflict>
</comment>
<proteinExistence type="evidence at transcript level"/>
<feature type="chain" id="PRO_0000206091" description="Proton-coupled zinc antiporter SLC30A1">
    <location>
        <begin position="1"/>
        <end position="505"/>
    </location>
</feature>
<feature type="topological domain" description="Cytoplasmic" evidence="3">
    <location>
        <begin position="1"/>
        <end position="10"/>
    </location>
</feature>
<feature type="transmembrane region" description="Helical" evidence="4">
    <location>
        <begin position="11"/>
        <end position="31"/>
    </location>
</feature>
<feature type="topological domain" description="Extracellular" evidence="3">
    <location>
        <begin position="32"/>
        <end position="35"/>
    </location>
</feature>
<feature type="transmembrane region" description="Helical" evidence="4">
    <location>
        <begin position="36"/>
        <end position="56"/>
    </location>
</feature>
<feature type="topological domain" description="Cytoplasmic" evidence="3">
    <location>
        <begin position="57"/>
        <end position="80"/>
    </location>
</feature>
<feature type="transmembrane region" description="Helical" evidence="4">
    <location>
        <begin position="81"/>
        <end position="101"/>
    </location>
</feature>
<feature type="topological domain" description="Extracellular" evidence="3">
    <location>
        <begin position="102"/>
        <end position="113"/>
    </location>
</feature>
<feature type="transmembrane region" description="Helical" evidence="4">
    <location>
        <begin position="114"/>
        <end position="134"/>
    </location>
</feature>
<feature type="topological domain" description="Cytoplasmic" evidence="3">
    <location>
        <begin position="135"/>
        <end position="246"/>
    </location>
</feature>
<feature type="transmembrane region" description="Helical" evidence="4">
    <location>
        <begin position="247"/>
        <end position="267"/>
    </location>
</feature>
<feature type="topological domain" description="Extracellular" evidence="3">
    <location>
        <begin position="268"/>
        <end position="306"/>
    </location>
</feature>
<feature type="transmembrane region" description="Helical" evidence="4">
    <location>
        <begin position="307"/>
        <end position="327"/>
    </location>
</feature>
<feature type="topological domain" description="Cytoplasmic" evidence="3">
    <location>
        <begin position="328"/>
        <end position="505"/>
    </location>
</feature>
<feature type="region of interest" description="Disordered" evidence="5">
    <location>
        <begin position="142"/>
        <end position="215"/>
    </location>
</feature>
<feature type="compositionally biased region" description="Polar residues" evidence="5">
    <location>
        <begin position="187"/>
        <end position="199"/>
    </location>
</feature>
<feature type="compositionally biased region" description="Basic and acidic residues" evidence="5">
    <location>
        <begin position="203"/>
        <end position="214"/>
    </location>
</feature>
<feature type="binding site" evidence="2">
    <location>
        <position position="43"/>
    </location>
    <ligand>
        <name>Zn(2+)</name>
        <dbReference type="ChEBI" id="CHEBI:29105"/>
        <note>transported zinc</note>
    </ligand>
</feature>
<feature type="binding site" evidence="1">
    <location>
        <position position="47"/>
    </location>
    <ligand>
        <name>Zn(2+)</name>
        <dbReference type="ChEBI" id="CHEBI:29105"/>
        <note>transported zinc</note>
    </ligand>
</feature>
<feature type="binding site" evidence="1">
    <location>
        <position position="249"/>
    </location>
    <ligand>
        <name>Zn(2+)</name>
        <dbReference type="ChEBI" id="CHEBI:29105"/>
        <note>transported zinc</note>
    </ligand>
</feature>
<feature type="binding site" evidence="2">
    <location>
        <position position="253"/>
    </location>
    <ligand>
        <name>Zn(2+)</name>
        <dbReference type="ChEBI" id="CHEBI:29105"/>
        <note>transported zinc</note>
    </ligand>
</feature>
<feature type="modified residue" description="Phosphoserine" evidence="3">
    <location>
        <position position="504"/>
    </location>
</feature>
<feature type="glycosylation site" description="N-linked (GlcNAc...) asparagine" evidence="4">
    <location>
        <position position="297"/>
    </location>
</feature>
<feature type="sequence conflict" description="In Ref. 1; BAE00525." evidence="6" ref="1">
    <original>I</original>
    <variation>M</variation>
    <location>
        <position position="386"/>
    </location>
</feature>